<protein>
    <recommendedName>
        <fullName>Prunasin beta-glucosidase 2A</fullName>
        <ecNumber>3.2.1.118</ecNumber>
    </recommendedName>
    <alternativeName>
        <fullName>Prunasin hydrolase isozyme IIA</fullName>
        <shortName>PH IIA</shortName>
    </alternativeName>
</protein>
<accession>P29264</accession>
<name>PH2_PRUSE</name>
<comment type="catalytic activity">
    <reaction>
        <text>(R)-prunasin + H2O = mandelonitrile + D-glucose</text>
        <dbReference type="Rhea" id="RHEA:16489"/>
        <dbReference type="ChEBI" id="CHEBI:4167"/>
        <dbReference type="ChEBI" id="CHEBI:15377"/>
        <dbReference type="ChEBI" id="CHEBI:16910"/>
        <dbReference type="ChEBI" id="CHEBI:17396"/>
        <dbReference type="EC" id="3.2.1.118"/>
    </reaction>
</comment>
<comment type="subunit">
    <text>Homodimer.</text>
</comment>
<comment type="developmental stage">
    <text>Absent from maturing black cherry fruits until 6 weeks after flowering. Then, concomitant with cotyledon development, the level of enzyme increases with specificity for embryonal tissues.</text>
</comment>
<comment type="PTM">
    <text>Glycosylated.</text>
</comment>
<sequence>AGTYPPVVXATLXRTH</sequence>
<dbReference type="EC" id="3.2.1.118"/>
<dbReference type="GO" id="GO:0050224">
    <property type="term" value="F:prunasin beta-glucosidase activity"/>
    <property type="evidence" value="ECO:0007669"/>
    <property type="project" value="UniProtKB-EC"/>
</dbReference>
<feature type="chain" id="PRO_0000058368" description="Prunasin beta-glucosidase 2A">
    <location>
        <begin position="1"/>
        <end position="16" status="greater than"/>
    </location>
</feature>
<feature type="non-terminal residue">
    <location>
        <position position="16"/>
    </location>
</feature>
<reference key="1">
    <citation type="journal article" date="1992" name="Plant Physiol.">
        <title>Prunus serotina amygdalin hydrolase and prunasin hydrolase: purification, N-terminal sequencing, and antibody production.</title>
        <authorList>
            <person name="Li C.P."/>
            <person name="Swain E."/>
            <person name="Poulton J.E."/>
        </authorList>
    </citation>
    <scope>PROTEIN SEQUENCE</scope>
    <source>
        <tissue>Seed</tissue>
    </source>
</reference>
<keyword id="KW-0903">Direct protein sequencing</keyword>
<keyword id="KW-0325">Glycoprotein</keyword>
<keyword id="KW-0326">Glycosidase</keyword>
<keyword id="KW-0378">Hydrolase</keyword>
<proteinExistence type="evidence at protein level"/>
<organism>
    <name type="scientific">Prunus serotina</name>
    <name type="common">Black cherry</name>
    <dbReference type="NCBI Taxonomy" id="23207"/>
    <lineage>
        <taxon>Eukaryota</taxon>
        <taxon>Viridiplantae</taxon>
        <taxon>Streptophyta</taxon>
        <taxon>Embryophyta</taxon>
        <taxon>Tracheophyta</taxon>
        <taxon>Spermatophyta</taxon>
        <taxon>Magnoliopsida</taxon>
        <taxon>eudicotyledons</taxon>
        <taxon>Gunneridae</taxon>
        <taxon>Pentapetalae</taxon>
        <taxon>rosids</taxon>
        <taxon>fabids</taxon>
        <taxon>Rosales</taxon>
        <taxon>Rosaceae</taxon>
        <taxon>Amygdaloideae</taxon>
        <taxon>Amygdaleae</taxon>
        <taxon>Prunus</taxon>
    </lineage>
</organism>